<reference key="1">
    <citation type="journal article" date="2001" name="Mol. Biol. Evol.">
        <title>Mechanisms for evolving hypervariability: the case of conopeptides.</title>
        <authorList>
            <person name="Conticello S.G."/>
            <person name="Gilad Y."/>
            <person name="Avidan N."/>
            <person name="Ben-Asher E."/>
            <person name="Levy Z."/>
            <person name="Fainzilber M."/>
        </authorList>
    </citation>
    <scope>NUCLEOTIDE SEQUENCE [MRNA]</scope>
    <source>
        <tissue>Venom duct</tissue>
    </source>
</reference>
<dbReference type="EMBL" id="AF214957">
    <property type="protein sequence ID" value="AAG60385.1"/>
    <property type="molecule type" value="mRNA"/>
</dbReference>
<dbReference type="ConoServer" id="644">
    <property type="toxin name" value="TxMRCL-D012 precursor"/>
</dbReference>
<dbReference type="GO" id="GO:0005576">
    <property type="term" value="C:extracellular region"/>
    <property type="evidence" value="ECO:0007669"/>
    <property type="project" value="UniProtKB-SubCell"/>
</dbReference>
<dbReference type="GO" id="GO:0090729">
    <property type="term" value="F:toxin activity"/>
    <property type="evidence" value="ECO:0007669"/>
    <property type="project" value="UniProtKB-KW"/>
</dbReference>
<dbReference type="InterPro" id="IPR031565">
    <property type="entry name" value="T-conotoxin"/>
</dbReference>
<dbReference type="Pfam" id="PF16981">
    <property type="entry name" value="Chi-conotoxin"/>
    <property type="match status" value="1"/>
</dbReference>
<evidence type="ECO:0000250" key="1"/>
<evidence type="ECO:0000255" key="2"/>
<evidence type="ECO:0000305" key="3"/>
<evidence type="ECO:0000305" key="4">
    <source>
    </source>
</evidence>
<evidence type="ECO:0000312" key="5">
    <source>
        <dbReference type="EMBL" id="AAG60385.1"/>
    </source>
</evidence>
<organism>
    <name type="scientific">Conus textile</name>
    <name type="common">Cloth-of-gold cone</name>
    <dbReference type="NCBI Taxonomy" id="6494"/>
    <lineage>
        <taxon>Eukaryota</taxon>
        <taxon>Metazoa</taxon>
        <taxon>Spiralia</taxon>
        <taxon>Lophotrochozoa</taxon>
        <taxon>Mollusca</taxon>
        <taxon>Gastropoda</taxon>
        <taxon>Caenogastropoda</taxon>
        <taxon>Neogastropoda</taxon>
        <taxon>Conoidea</taxon>
        <taxon>Conidae</taxon>
        <taxon>Conus</taxon>
        <taxon>Cylinder</taxon>
    </lineage>
</organism>
<accession>Q9BPH0</accession>
<protein>
    <recommendedName>
        <fullName evidence="5">Conotoxin TxMRCL-D012</fullName>
    </recommendedName>
</protein>
<proteinExistence type="inferred from homology"/>
<comment type="subcellular location">
    <subcellularLocation>
        <location evidence="4">Secreted</location>
    </subcellularLocation>
</comment>
<comment type="tissue specificity">
    <text evidence="4">Expressed by the venom duct.</text>
</comment>
<comment type="domain">
    <text evidence="3">The cysteine framework is V (CC-CC).</text>
</comment>
<comment type="PTM">
    <text evidence="3">Contains 2 disulfide bonds that can be either 'C1-C3, C2-C4' or 'C1-C4, C2-C3', since these disulfide connectivities have been observed for conotoxins with cysteine framework V (for examples, see AC P0DQQ7 and AC P81755).</text>
</comment>
<comment type="similarity">
    <text evidence="3">Belongs to the conotoxin T superfamily.</text>
</comment>
<sequence>MRCLPVFVILLLLIASTPSDTVPLKTKDDMPQASFHGNARRTLQMLSKKQCCWYFDISCCLWP</sequence>
<feature type="signal peptide" evidence="2">
    <location>
        <begin position="1"/>
        <end position="19"/>
    </location>
</feature>
<feature type="propeptide" id="PRO_0000404934" evidence="1">
    <location>
        <begin position="20"/>
        <end position="47"/>
    </location>
</feature>
<feature type="peptide" id="PRO_0000404935" description="Conotoxin TxMRCL-D012">
    <location>
        <begin position="50"/>
        <end position="63"/>
    </location>
</feature>
<feature type="modified residue" description="Pyrrolidone carboxylic acid" evidence="1">
    <location>
        <position position="50"/>
    </location>
</feature>
<name>CT512_CONTE</name>
<keyword id="KW-0165">Cleavage on pair of basic residues</keyword>
<keyword id="KW-1015">Disulfide bond</keyword>
<keyword id="KW-0528">Neurotoxin</keyword>
<keyword id="KW-0873">Pyrrolidone carboxylic acid</keyword>
<keyword id="KW-0964">Secreted</keyword>
<keyword id="KW-0732">Signal</keyword>
<keyword id="KW-0800">Toxin</keyword>